<gene>
    <name type="ordered locus">ECU04_0750</name>
</gene>
<reference key="1">
    <citation type="journal article" date="2001" name="Nature">
        <title>Genome sequence and gene compaction of the eukaryote parasite Encephalitozoon cuniculi.</title>
        <authorList>
            <person name="Katinka M.D."/>
            <person name="Duprat S."/>
            <person name="Cornillot E."/>
            <person name="Metenier G."/>
            <person name="Thomarat F."/>
            <person name="Prensier G."/>
            <person name="Barbe V."/>
            <person name="Peyretaillade E."/>
            <person name="Brottier P."/>
            <person name="Wincker P."/>
            <person name="Delbac F."/>
            <person name="El Alaoui H."/>
            <person name="Peyret P."/>
            <person name="Saurin W."/>
            <person name="Gouy M."/>
            <person name="Weissenbach J."/>
            <person name="Vivares C.P."/>
        </authorList>
    </citation>
    <scope>NUCLEOTIDE SEQUENCE [LARGE SCALE GENOMIC DNA]</scope>
    <source>
        <strain>GB-M1</strain>
    </source>
</reference>
<reference key="2">
    <citation type="journal article" date="2006" name="Proteomics">
        <title>Proteomic analysis of the eukaryotic parasite Encephalitozoon cuniculi (microsporidia): a reference map for proteins expressed in late sporogonial stages.</title>
        <authorList>
            <person name="Brosson D."/>
            <person name="Kuhn L."/>
            <person name="Delbac F."/>
            <person name="Garin J."/>
            <person name="Vivares C.P."/>
            <person name="Texier C."/>
        </authorList>
    </citation>
    <scope>IDENTIFICATION BY MASS SPECTROMETRY [LARGE SCALE ANALYSIS]</scope>
    <scope>DEVELOPMENTAL STAGE</scope>
</reference>
<sequence>MIDINLIRDPKTREKVVESEKKRFRDGLAVGKAYELDRKRIEMNFRLDQINTRINQLNREIKSGYRQGKNKEDGDLSEKVAEIKGLSDEAKGLRDDVKAVEDELNKVMKGIGNIISPSVVVSNDEKDNPIVRSYRSSRNMQKNPRPFCVLMKDFTHSVAGAKVMGHRGYYLSGKMARLAQALTRYAIDFLENKGYTYIQTPVMLRRDVMRKTSQLSDFDDQLYKVEDDLYLIATSEQSLAALYMDERMVPQEVPKKFCGQSLCFRKEAGAHGKDNAGLFRVHQFEKIEQFVICGPEESQKYHEEMIKACEEFYQSLDISYNVVGIVSGELNDAAAIKYDLEAYFPSAEKYRELVSCSNCTDYQSRELEIRYGVVKENNRKIYVHLLNGTMCAVQRALCCIVENYQTGDGIAIPDVLQGYFGGDLIELGP</sequence>
<evidence type="ECO:0000250" key="1"/>
<evidence type="ECO:0000269" key="2">
    <source>
    </source>
</evidence>
<evidence type="ECO:0000305" key="3"/>
<dbReference type="EC" id="6.1.1.11"/>
<dbReference type="EMBL" id="AL590444">
    <property type="protein sequence ID" value="CAD25262.1"/>
    <property type="molecule type" value="Genomic_DNA"/>
</dbReference>
<dbReference type="RefSeq" id="NP_584758.1">
    <property type="nucleotide sequence ID" value="NM_001041108.1"/>
</dbReference>
<dbReference type="SMR" id="Q8SS48"/>
<dbReference type="FunCoup" id="Q8SS48">
    <property type="interactions" value="215"/>
</dbReference>
<dbReference type="STRING" id="284813.Q8SS48"/>
<dbReference type="GeneID" id="858906"/>
<dbReference type="KEGG" id="ecu:ECU04_0750"/>
<dbReference type="VEuPathDB" id="MicrosporidiaDB:ECU04_0750"/>
<dbReference type="HOGENOM" id="CLU_023797_0_1_1"/>
<dbReference type="InParanoid" id="Q8SS48"/>
<dbReference type="OMA" id="GYTPCFR"/>
<dbReference type="OrthoDB" id="10264585at2759"/>
<dbReference type="UniPathway" id="UPA00906">
    <property type="reaction ID" value="UER00895"/>
</dbReference>
<dbReference type="Proteomes" id="UP000000819">
    <property type="component" value="Chromosome IV"/>
</dbReference>
<dbReference type="GO" id="GO:0005524">
    <property type="term" value="F:ATP binding"/>
    <property type="evidence" value="ECO:0007669"/>
    <property type="project" value="UniProtKB-KW"/>
</dbReference>
<dbReference type="GO" id="GO:0004828">
    <property type="term" value="F:serine-tRNA ligase activity"/>
    <property type="evidence" value="ECO:0007669"/>
    <property type="project" value="UniProtKB-EC"/>
</dbReference>
<dbReference type="GO" id="GO:0006434">
    <property type="term" value="P:seryl-tRNA aminoacylation"/>
    <property type="evidence" value="ECO:0007669"/>
    <property type="project" value="InterPro"/>
</dbReference>
<dbReference type="CDD" id="cd00770">
    <property type="entry name" value="SerRS_core"/>
    <property type="match status" value="1"/>
</dbReference>
<dbReference type="Gene3D" id="3.30.930.10">
    <property type="entry name" value="Bira Bifunctional Protein, Domain 2"/>
    <property type="match status" value="1"/>
</dbReference>
<dbReference type="Gene3D" id="1.10.287.40">
    <property type="entry name" value="Serine-tRNA synthetase, tRNA binding domain"/>
    <property type="match status" value="1"/>
</dbReference>
<dbReference type="InterPro" id="IPR002314">
    <property type="entry name" value="aa-tRNA-synt_IIb"/>
</dbReference>
<dbReference type="InterPro" id="IPR006195">
    <property type="entry name" value="aa-tRNA-synth_II"/>
</dbReference>
<dbReference type="InterPro" id="IPR045864">
    <property type="entry name" value="aa-tRNA-synth_II/BPL/LPL"/>
</dbReference>
<dbReference type="InterPro" id="IPR002317">
    <property type="entry name" value="Ser-tRNA-ligase_type_1"/>
</dbReference>
<dbReference type="InterPro" id="IPR015866">
    <property type="entry name" value="Ser-tRNA-synth_1_N"/>
</dbReference>
<dbReference type="InterPro" id="IPR042103">
    <property type="entry name" value="SerRS_1_N_sf"/>
</dbReference>
<dbReference type="InterPro" id="IPR033729">
    <property type="entry name" value="SerRS_core"/>
</dbReference>
<dbReference type="InterPro" id="IPR010978">
    <property type="entry name" value="tRNA-bd_arm"/>
</dbReference>
<dbReference type="NCBIfam" id="TIGR00414">
    <property type="entry name" value="serS"/>
    <property type="match status" value="1"/>
</dbReference>
<dbReference type="PANTHER" id="PTHR11778">
    <property type="entry name" value="SERYL-TRNA SYNTHETASE"/>
    <property type="match status" value="1"/>
</dbReference>
<dbReference type="Pfam" id="PF02403">
    <property type="entry name" value="Seryl_tRNA_N"/>
    <property type="match status" value="1"/>
</dbReference>
<dbReference type="Pfam" id="PF00587">
    <property type="entry name" value="tRNA-synt_2b"/>
    <property type="match status" value="1"/>
</dbReference>
<dbReference type="PIRSF" id="PIRSF001529">
    <property type="entry name" value="Ser-tRNA-synth_IIa"/>
    <property type="match status" value="1"/>
</dbReference>
<dbReference type="PRINTS" id="PR00981">
    <property type="entry name" value="TRNASYNTHSER"/>
</dbReference>
<dbReference type="SUPFAM" id="SSF55681">
    <property type="entry name" value="Class II aaRS and biotin synthetases"/>
    <property type="match status" value="1"/>
</dbReference>
<dbReference type="SUPFAM" id="SSF46589">
    <property type="entry name" value="tRNA-binding arm"/>
    <property type="match status" value="1"/>
</dbReference>
<dbReference type="PROSITE" id="PS50862">
    <property type="entry name" value="AA_TRNA_LIGASE_II"/>
    <property type="match status" value="1"/>
</dbReference>
<name>SYS_ENCCU</name>
<organism>
    <name type="scientific">Encephalitozoon cuniculi (strain GB-M1)</name>
    <name type="common">Microsporidian parasite</name>
    <dbReference type="NCBI Taxonomy" id="284813"/>
    <lineage>
        <taxon>Eukaryota</taxon>
        <taxon>Fungi</taxon>
        <taxon>Fungi incertae sedis</taxon>
        <taxon>Microsporidia</taxon>
        <taxon>Unikaryonidae</taxon>
        <taxon>Encephalitozoon</taxon>
    </lineage>
</organism>
<keyword id="KW-0030">Aminoacyl-tRNA synthetase</keyword>
<keyword id="KW-0067">ATP-binding</keyword>
<keyword id="KW-0436">Ligase</keyword>
<keyword id="KW-0547">Nucleotide-binding</keyword>
<keyword id="KW-0648">Protein biosynthesis</keyword>
<keyword id="KW-1185">Reference proteome</keyword>
<accession>Q8SS48</accession>
<comment type="function">
    <text evidence="1">Catalyzes the attachment of serine to tRNA(Ser). Is also probably able to aminoacylate tRNA(Sec) with serine, to form the misacylated tRNA L-seryl-tRNA(Sec), which will be further converted into selenocysteinyl-tRNA(Sec) (By similarity).</text>
</comment>
<comment type="catalytic activity">
    <reaction>
        <text>tRNA(Ser) + L-serine + ATP = L-seryl-tRNA(Ser) + AMP + diphosphate + H(+)</text>
        <dbReference type="Rhea" id="RHEA:12292"/>
        <dbReference type="Rhea" id="RHEA-COMP:9669"/>
        <dbReference type="Rhea" id="RHEA-COMP:9703"/>
        <dbReference type="ChEBI" id="CHEBI:15378"/>
        <dbReference type="ChEBI" id="CHEBI:30616"/>
        <dbReference type="ChEBI" id="CHEBI:33019"/>
        <dbReference type="ChEBI" id="CHEBI:33384"/>
        <dbReference type="ChEBI" id="CHEBI:78442"/>
        <dbReference type="ChEBI" id="CHEBI:78533"/>
        <dbReference type="ChEBI" id="CHEBI:456215"/>
        <dbReference type="EC" id="6.1.1.11"/>
    </reaction>
</comment>
<comment type="catalytic activity">
    <reaction>
        <text>tRNA(Sec) + L-serine + ATP = L-seryl-tRNA(Sec) + AMP + diphosphate + H(+)</text>
        <dbReference type="Rhea" id="RHEA:42580"/>
        <dbReference type="Rhea" id="RHEA-COMP:9742"/>
        <dbReference type="Rhea" id="RHEA-COMP:10128"/>
        <dbReference type="ChEBI" id="CHEBI:15378"/>
        <dbReference type="ChEBI" id="CHEBI:30616"/>
        <dbReference type="ChEBI" id="CHEBI:33019"/>
        <dbReference type="ChEBI" id="CHEBI:33384"/>
        <dbReference type="ChEBI" id="CHEBI:78442"/>
        <dbReference type="ChEBI" id="CHEBI:78533"/>
        <dbReference type="ChEBI" id="CHEBI:456215"/>
        <dbReference type="EC" id="6.1.1.11"/>
    </reaction>
</comment>
<comment type="pathway">
    <text>Aminoacyl-tRNA biosynthesis; selenocysteinyl-tRNA(Sec) biosynthesis; L-seryl-tRNA(Sec) from L-serine and tRNA(Sec): step 1/1.</text>
</comment>
<comment type="subunit">
    <text evidence="1">Homodimer. The tRNA molecule probably binds across the dimer (By similarity).</text>
</comment>
<comment type="developmental stage">
    <text evidence="2">Expressed in late sporogonial stages.</text>
</comment>
<comment type="domain">
    <text evidence="1">Consists of two distinct domains, a catalytic core and a N-terminal extension that is involved in tRNA binding.</text>
</comment>
<comment type="similarity">
    <text evidence="3">Belongs to the class-II aminoacyl-tRNA synthetase family. Type-1 seryl-tRNA synthetase subfamily.</text>
</comment>
<proteinExistence type="evidence at protein level"/>
<protein>
    <recommendedName>
        <fullName>Serine--tRNA ligase</fullName>
        <ecNumber>6.1.1.11</ecNumber>
    </recommendedName>
    <alternativeName>
        <fullName>Seryl-tRNA synthetase</fullName>
        <shortName>SerRS</shortName>
    </alternativeName>
    <alternativeName>
        <fullName>Seryl-tRNA(Ser/Sec) synthetase</fullName>
    </alternativeName>
</protein>
<feature type="chain" id="PRO_0000383146" description="Serine--tRNA ligase">
    <location>
        <begin position="1"/>
        <end position="429"/>
    </location>
</feature>
<feature type="binding site" evidence="1">
    <location>
        <begin position="234"/>
        <end position="236"/>
    </location>
    <ligand>
        <name>L-serine</name>
        <dbReference type="ChEBI" id="CHEBI:33384"/>
    </ligand>
</feature>
<feature type="binding site" evidence="1">
    <location>
        <begin position="265"/>
        <end position="267"/>
    </location>
    <ligand>
        <name>ATP</name>
        <dbReference type="ChEBI" id="CHEBI:30616"/>
    </ligand>
</feature>
<feature type="binding site" evidence="1">
    <location>
        <position position="281"/>
    </location>
    <ligand>
        <name>ATP</name>
        <dbReference type="ChEBI" id="CHEBI:30616"/>
    </ligand>
</feature>
<feature type="binding site" evidence="1">
    <location>
        <position position="288"/>
    </location>
    <ligand>
        <name>L-serine</name>
        <dbReference type="ChEBI" id="CHEBI:33384"/>
    </ligand>
</feature>
<feature type="binding site" evidence="1">
    <location>
        <begin position="352"/>
        <end position="355"/>
    </location>
    <ligand>
        <name>ATP</name>
        <dbReference type="ChEBI" id="CHEBI:30616"/>
    </ligand>
</feature>
<feature type="binding site" evidence="1">
    <location>
        <position position="389"/>
    </location>
    <ligand>
        <name>L-serine</name>
        <dbReference type="ChEBI" id="CHEBI:33384"/>
    </ligand>
</feature>